<keyword id="KW-0963">Cytoplasm</keyword>
<keyword id="KW-0620">Polyamine biosynthesis</keyword>
<keyword id="KW-0745">Spermidine biosynthesis</keyword>
<keyword id="KW-0808">Transferase</keyword>
<gene>
    <name evidence="1" type="primary">speE</name>
    <name type="ordered locus">Bcer98_3884</name>
</gene>
<sequence length="275" mass="31160">MELWFTEKQTKHFGITARINRTLHTEQTEFQKLDMVETEEFGNMLILDGMVMTTEKDEFVYHEMVAHVPLFTHPNPENVLVVGGGDGGVIREVLKHPSVKKATLVEIDGKVIEYSKKYLPSIAGALDHERVEVKVGDGFLHIAESENEYDVIMVDSTEPVGPAVNLFTKGFYAGISKALKEDGIFVAQTDNPWFTPELITNVVKDVKEIFPITRLYTANIPTYPSGLWTFTIGSKKYDPLEVSEDRFHDIETKYYTKELHKASFALPKFVGDLIK</sequence>
<proteinExistence type="inferred from homology"/>
<comment type="function">
    <text evidence="1">Catalyzes the irreversible transfer of a propylamine group from the amino donor S-adenosylmethioninamine (decarboxy-AdoMet) to putrescine (1,4-diaminobutane) to yield spermidine.</text>
</comment>
<comment type="catalytic activity">
    <reaction evidence="1">
        <text>S-adenosyl 3-(methylsulfanyl)propylamine + putrescine = S-methyl-5'-thioadenosine + spermidine + H(+)</text>
        <dbReference type="Rhea" id="RHEA:12721"/>
        <dbReference type="ChEBI" id="CHEBI:15378"/>
        <dbReference type="ChEBI" id="CHEBI:17509"/>
        <dbReference type="ChEBI" id="CHEBI:57443"/>
        <dbReference type="ChEBI" id="CHEBI:57834"/>
        <dbReference type="ChEBI" id="CHEBI:326268"/>
        <dbReference type="EC" id="2.5.1.16"/>
    </reaction>
</comment>
<comment type="pathway">
    <text evidence="1">Amine and polyamine biosynthesis; spermidine biosynthesis; spermidine from putrescine: step 1/1.</text>
</comment>
<comment type="subunit">
    <text evidence="1">Homodimer or homotetramer.</text>
</comment>
<comment type="subcellular location">
    <subcellularLocation>
        <location evidence="1">Cytoplasm</location>
    </subcellularLocation>
</comment>
<comment type="similarity">
    <text evidence="1">Belongs to the spermidine/spermine synthase family.</text>
</comment>
<feature type="chain" id="PRO_1000197462" description="Polyamine aminopropyltransferase">
    <location>
        <begin position="1"/>
        <end position="275"/>
    </location>
</feature>
<feature type="domain" description="PABS" evidence="1">
    <location>
        <begin position="2"/>
        <end position="235"/>
    </location>
</feature>
<feature type="active site" description="Proton acceptor" evidence="1">
    <location>
        <position position="155"/>
    </location>
</feature>
<feature type="binding site" evidence="1">
    <location>
        <position position="31"/>
    </location>
    <ligand>
        <name>S-methyl-5'-thioadenosine</name>
        <dbReference type="ChEBI" id="CHEBI:17509"/>
    </ligand>
</feature>
<feature type="binding site" evidence="1">
    <location>
        <position position="62"/>
    </location>
    <ligand>
        <name>spermidine</name>
        <dbReference type="ChEBI" id="CHEBI:57834"/>
    </ligand>
</feature>
<feature type="binding site" evidence="1">
    <location>
        <position position="86"/>
    </location>
    <ligand>
        <name>spermidine</name>
        <dbReference type="ChEBI" id="CHEBI:57834"/>
    </ligand>
</feature>
<feature type="binding site" evidence="1">
    <location>
        <position position="106"/>
    </location>
    <ligand>
        <name>S-methyl-5'-thioadenosine</name>
        <dbReference type="ChEBI" id="CHEBI:17509"/>
    </ligand>
</feature>
<feature type="binding site" evidence="1">
    <location>
        <begin position="137"/>
        <end position="138"/>
    </location>
    <ligand>
        <name>S-methyl-5'-thioadenosine</name>
        <dbReference type="ChEBI" id="CHEBI:17509"/>
    </ligand>
</feature>
<feature type="binding site" evidence="1">
    <location>
        <begin position="155"/>
        <end position="158"/>
    </location>
    <ligand>
        <name>spermidine</name>
        <dbReference type="ChEBI" id="CHEBI:57834"/>
    </ligand>
</feature>
<feature type="binding site" evidence="1">
    <location>
        <position position="162"/>
    </location>
    <ligand>
        <name>S-methyl-5'-thioadenosine</name>
        <dbReference type="ChEBI" id="CHEBI:17509"/>
    </ligand>
</feature>
<name>SPEE_BACCN</name>
<reference key="1">
    <citation type="journal article" date="2008" name="Chem. Biol. Interact.">
        <title>Extending the Bacillus cereus group genomics to putative food-borne pathogens of different toxicity.</title>
        <authorList>
            <person name="Lapidus A."/>
            <person name="Goltsman E."/>
            <person name="Auger S."/>
            <person name="Galleron N."/>
            <person name="Segurens B."/>
            <person name="Dossat C."/>
            <person name="Land M.L."/>
            <person name="Broussolle V."/>
            <person name="Brillard J."/>
            <person name="Guinebretiere M.-H."/>
            <person name="Sanchis V."/>
            <person name="Nguen-the C."/>
            <person name="Lereclus D."/>
            <person name="Richardson P."/>
            <person name="Wincker P."/>
            <person name="Weissenbach J."/>
            <person name="Ehrlich S.D."/>
            <person name="Sorokin A."/>
        </authorList>
    </citation>
    <scope>NUCLEOTIDE SEQUENCE [LARGE SCALE GENOMIC DNA]</scope>
    <source>
        <strain>DSM 22905 / CIP 110041 / 391-98 / NVH 391-98</strain>
    </source>
</reference>
<evidence type="ECO:0000255" key="1">
    <source>
        <dbReference type="HAMAP-Rule" id="MF_00198"/>
    </source>
</evidence>
<organism>
    <name type="scientific">Bacillus cytotoxicus (strain DSM 22905 / CIP 110041 / 391-98 / NVH 391-98)</name>
    <dbReference type="NCBI Taxonomy" id="315749"/>
    <lineage>
        <taxon>Bacteria</taxon>
        <taxon>Bacillati</taxon>
        <taxon>Bacillota</taxon>
        <taxon>Bacilli</taxon>
        <taxon>Bacillales</taxon>
        <taxon>Bacillaceae</taxon>
        <taxon>Bacillus</taxon>
        <taxon>Bacillus cereus group</taxon>
    </lineage>
</organism>
<protein>
    <recommendedName>
        <fullName evidence="1">Polyamine aminopropyltransferase</fullName>
    </recommendedName>
    <alternativeName>
        <fullName evidence="1">Putrescine aminopropyltransferase</fullName>
        <shortName evidence="1">PAPT</shortName>
    </alternativeName>
    <alternativeName>
        <fullName evidence="1">Spermidine synthase</fullName>
        <shortName evidence="1">SPDS</shortName>
        <shortName evidence="1">SPDSY</shortName>
        <ecNumber evidence="1">2.5.1.16</ecNumber>
    </alternativeName>
</protein>
<dbReference type="EC" id="2.5.1.16" evidence="1"/>
<dbReference type="EMBL" id="CP000764">
    <property type="protein sequence ID" value="ABS24070.1"/>
    <property type="molecule type" value="Genomic_DNA"/>
</dbReference>
<dbReference type="RefSeq" id="WP_012096329.1">
    <property type="nucleotide sequence ID" value="NC_009674.1"/>
</dbReference>
<dbReference type="SMR" id="A7GVB2"/>
<dbReference type="STRING" id="315749.Bcer98_3884"/>
<dbReference type="GeneID" id="33899121"/>
<dbReference type="KEGG" id="bcy:Bcer98_3884"/>
<dbReference type="eggNOG" id="COG0421">
    <property type="taxonomic scope" value="Bacteria"/>
</dbReference>
<dbReference type="HOGENOM" id="CLU_048199_0_0_9"/>
<dbReference type="OrthoDB" id="9793120at2"/>
<dbReference type="UniPathway" id="UPA00248">
    <property type="reaction ID" value="UER00314"/>
</dbReference>
<dbReference type="Proteomes" id="UP000002300">
    <property type="component" value="Chromosome"/>
</dbReference>
<dbReference type="GO" id="GO:0005829">
    <property type="term" value="C:cytosol"/>
    <property type="evidence" value="ECO:0007669"/>
    <property type="project" value="TreeGrafter"/>
</dbReference>
<dbReference type="GO" id="GO:0004766">
    <property type="term" value="F:spermidine synthase activity"/>
    <property type="evidence" value="ECO:0007669"/>
    <property type="project" value="UniProtKB-UniRule"/>
</dbReference>
<dbReference type="GO" id="GO:0008295">
    <property type="term" value="P:spermidine biosynthetic process"/>
    <property type="evidence" value="ECO:0007669"/>
    <property type="project" value="UniProtKB-UniRule"/>
</dbReference>
<dbReference type="CDD" id="cd02440">
    <property type="entry name" value="AdoMet_MTases"/>
    <property type="match status" value="1"/>
</dbReference>
<dbReference type="FunFam" id="2.30.140.10:FF:000004">
    <property type="entry name" value="Polyamine aminopropyltransferase"/>
    <property type="match status" value="1"/>
</dbReference>
<dbReference type="FunFam" id="3.40.50.150:FF:000056">
    <property type="entry name" value="Polyamine aminopropyltransferase"/>
    <property type="match status" value="1"/>
</dbReference>
<dbReference type="Gene3D" id="2.30.140.10">
    <property type="entry name" value="Spermidine synthase, tetramerisation domain"/>
    <property type="match status" value="1"/>
</dbReference>
<dbReference type="Gene3D" id="3.40.50.150">
    <property type="entry name" value="Vaccinia Virus protein VP39"/>
    <property type="match status" value="1"/>
</dbReference>
<dbReference type="HAMAP" id="MF_00198">
    <property type="entry name" value="Spermidine_synth"/>
    <property type="match status" value="1"/>
</dbReference>
<dbReference type="InterPro" id="IPR030374">
    <property type="entry name" value="PABS"/>
</dbReference>
<dbReference type="InterPro" id="IPR030373">
    <property type="entry name" value="PABS_CS"/>
</dbReference>
<dbReference type="InterPro" id="IPR029063">
    <property type="entry name" value="SAM-dependent_MTases_sf"/>
</dbReference>
<dbReference type="InterPro" id="IPR001045">
    <property type="entry name" value="Spermi_synthase"/>
</dbReference>
<dbReference type="InterPro" id="IPR035246">
    <property type="entry name" value="Spermidine_synt_N"/>
</dbReference>
<dbReference type="InterPro" id="IPR037163">
    <property type="entry name" value="Spermidine_synt_N_sf"/>
</dbReference>
<dbReference type="NCBIfam" id="NF037959">
    <property type="entry name" value="MFS_SpdSyn"/>
    <property type="match status" value="1"/>
</dbReference>
<dbReference type="NCBIfam" id="NF002010">
    <property type="entry name" value="PRK00811.1"/>
    <property type="match status" value="1"/>
</dbReference>
<dbReference type="NCBIfam" id="TIGR00417">
    <property type="entry name" value="speE"/>
    <property type="match status" value="1"/>
</dbReference>
<dbReference type="PANTHER" id="PTHR11558:SF11">
    <property type="entry name" value="SPERMIDINE SYNTHASE"/>
    <property type="match status" value="1"/>
</dbReference>
<dbReference type="PANTHER" id="PTHR11558">
    <property type="entry name" value="SPERMIDINE/SPERMINE SYNTHASE"/>
    <property type="match status" value="1"/>
</dbReference>
<dbReference type="Pfam" id="PF17284">
    <property type="entry name" value="Spermine_synt_N"/>
    <property type="match status" value="1"/>
</dbReference>
<dbReference type="Pfam" id="PF01564">
    <property type="entry name" value="Spermine_synth"/>
    <property type="match status" value="1"/>
</dbReference>
<dbReference type="SUPFAM" id="SSF53335">
    <property type="entry name" value="S-adenosyl-L-methionine-dependent methyltransferases"/>
    <property type="match status" value="1"/>
</dbReference>
<dbReference type="PROSITE" id="PS01330">
    <property type="entry name" value="PABS_1"/>
    <property type="match status" value="1"/>
</dbReference>
<dbReference type="PROSITE" id="PS51006">
    <property type="entry name" value="PABS_2"/>
    <property type="match status" value="1"/>
</dbReference>
<accession>A7GVB2</accession>